<reference key="1">
    <citation type="journal article" date="2004" name="Nat. Biotechnol.">
        <title>The genome sequence of the capnophilic rumen bacterium Mannheimia succiniciproducens.</title>
        <authorList>
            <person name="Hong S.H."/>
            <person name="Kim J.S."/>
            <person name="Lee S.Y."/>
            <person name="In Y.H."/>
            <person name="Choi S.S."/>
            <person name="Rih J.-K."/>
            <person name="Kim C.H."/>
            <person name="Jeong H."/>
            <person name="Hur C.G."/>
            <person name="Kim J.J."/>
        </authorList>
    </citation>
    <scope>NUCLEOTIDE SEQUENCE [LARGE SCALE GENOMIC DNA]</scope>
    <source>
        <strain>KCTC 0769BP / MBEL55E</strain>
    </source>
</reference>
<sequence>MNSQFKLIGFDLDGTLVNSLPDLALSVNSALAEFELPQAPEELVLTWIGNGADILIGRALDWAKEQSGKSLTDEQTAQLKERFSFYYAENLCNVSRLYPNVKETLETLKEQGFILAVVTNKPTRHVQPVLKAFAIDHLFSETLGGQSLPAIKPHPAPLYYLCGKFGLYPHQILFVGDSRNDILAAHSAGCTAVGLTYGYNYNMPIADSHPDWIFEDFADLLKIV</sequence>
<dbReference type="EC" id="3.1.3.18" evidence="1"/>
<dbReference type="EMBL" id="AE016827">
    <property type="protein sequence ID" value="AAU38938.1"/>
    <property type="molecule type" value="Genomic_DNA"/>
</dbReference>
<dbReference type="RefSeq" id="WP_011201476.1">
    <property type="nucleotide sequence ID" value="NC_006300.1"/>
</dbReference>
<dbReference type="SMR" id="Q65Q22"/>
<dbReference type="STRING" id="221988.MS2331"/>
<dbReference type="KEGG" id="msu:MS2331"/>
<dbReference type="eggNOG" id="COG0546">
    <property type="taxonomic scope" value="Bacteria"/>
</dbReference>
<dbReference type="HOGENOM" id="CLU_045011_19_1_6"/>
<dbReference type="OrthoDB" id="9776368at2"/>
<dbReference type="UniPathway" id="UPA00865">
    <property type="reaction ID" value="UER00834"/>
</dbReference>
<dbReference type="Proteomes" id="UP000000607">
    <property type="component" value="Chromosome"/>
</dbReference>
<dbReference type="GO" id="GO:0005829">
    <property type="term" value="C:cytosol"/>
    <property type="evidence" value="ECO:0007669"/>
    <property type="project" value="TreeGrafter"/>
</dbReference>
<dbReference type="GO" id="GO:0046872">
    <property type="term" value="F:metal ion binding"/>
    <property type="evidence" value="ECO:0007669"/>
    <property type="project" value="UniProtKB-KW"/>
</dbReference>
<dbReference type="GO" id="GO:0008967">
    <property type="term" value="F:phosphoglycolate phosphatase activity"/>
    <property type="evidence" value="ECO:0007669"/>
    <property type="project" value="UniProtKB-UniRule"/>
</dbReference>
<dbReference type="GO" id="GO:0005975">
    <property type="term" value="P:carbohydrate metabolic process"/>
    <property type="evidence" value="ECO:0007669"/>
    <property type="project" value="InterPro"/>
</dbReference>
<dbReference type="GO" id="GO:0006281">
    <property type="term" value="P:DNA repair"/>
    <property type="evidence" value="ECO:0007669"/>
    <property type="project" value="TreeGrafter"/>
</dbReference>
<dbReference type="GO" id="GO:0046295">
    <property type="term" value="P:glycolate biosynthetic process"/>
    <property type="evidence" value="ECO:0007669"/>
    <property type="project" value="UniProtKB-UniRule"/>
</dbReference>
<dbReference type="CDD" id="cd16417">
    <property type="entry name" value="HAD_PGPase"/>
    <property type="match status" value="1"/>
</dbReference>
<dbReference type="FunFam" id="3.40.50.1000:FF:000022">
    <property type="entry name" value="Phosphoglycolate phosphatase"/>
    <property type="match status" value="1"/>
</dbReference>
<dbReference type="Gene3D" id="3.40.50.1000">
    <property type="entry name" value="HAD superfamily/HAD-like"/>
    <property type="match status" value="1"/>
</dbReference>
<dbReference type="Gene3D" id="1.10.150.240">
    <property type="entry name" value="Putative phosphatase, domain 2"/>
    <property type="match status" value="1"/>
</dbReference>
<dbReference type="HAMAP" id="MF_00495">
    <property type="entry name" value="GPH_hydrolase_bact"/>
    <property type="match status" value="1"/>
</dbReference>
<dbReference type="InterPro" id="IPR050155">
    <property type="entry name" value="HAD-like_hydrolase_sf"/>
</dbReference>
<dbReference type="InterPro" id="IPR036412">
    <property type="entry name" value="HAD-like_sf"/>
</dbReference>
<dbReference type="InterPro" id="IPR006439">
    <property type="entry name" value="HAD-SF_hydro_IA"/>
</dbReference>
<dbReference type="InterPro" id="IPR041492">
    <property type="entry name" value="HAD_2"/>
</dbReference>
<dbReference type="InterPro" id="IPR023214">
    <property type="entry name" value="HAD_sf"/>
</dbReference>
<dbReference type="InterPro" id="IPR023198">
    <property type="entry name" value="PGP-like_dom2"/>
</dbReference>
<dbReference type="InterPro" id="IPR037512">
    <property type="entry name" value="PGPase_prok"/>
</dbReference>
<dbReference type="NCBIfam" id="TIGR01549">
    <property type="entry name" value="HAD-SF-IA-v1"/>
    <property type="match status" value="1"/>
</dbReference>
<dbReference type="NCBIfam" id="TIGR01509">
    <property type="entry name" value="HAD-SF-IA-v3"/>
    <property type="match status" value="1"/>
</dbReference>
<dbReference type="NCBIfam" id="TIGR01449">
    <property type="entry name" value="PGP_bact"/>
    <property type="match status" value="1"/>
</dbReference>
<dbReference type="NCBIfam" id="NF009695">
    <property type="entry name" value="PRK13222.1-2"/>
    <property type="match status" value="1"/>
</dbReference>
<dbReference type="PANTHER" id="PTHR43434">
    <property type="entry name" value="PHOSPHOGLYCOLATE PHOSPHATASE"/>
    <property type="match status" value="1"/>
</dbReference>
<dbReference type="PANTHER" id="PTHR43434:SF1">
    <property type="entry name" value="PHOSPHOGLYCOLATE PHOSPHATASE"/>
    <property type="match status" value="1"/>
</dbReference>
<dbReference type="Pfam" id="PF13419">
    <property type="entry name" value="HAD_2"/>
    <property type="match status" value="1"/>
</dbReference>
<dbReference type="PRINTS" id="PR00413">
    <property type="entry name" value="HADHALOGNASE"/>
</dbReference>
<dbReference type="SFLD" id="SFLDG01135">
    <property type="entry name" value="C1.5.6:_HAD__Beta-PGM__Phospha"/>
    <property type="match status" value="1"/>
</dbReference>
<dbReference type="SFLD" id="SFLDS00003">
    <property type="entry name" value="Haloacid_Dehalogenase"/>
    <property type="match status" value="1"/>
</dbReference>
<dbReference type="SUPFAM" id="SSF56784">
    <property type="entry name" value="HAD-like"/>
    <property type="match status" value="1"/>
</dbReference>
<feature type="chain" id="PRO_0000238160" description="Phosphoglycolate phosphatase">
    <location>
        <begin position="1"/>
        <end position="224"/>
    </location>
</feature>
<feature type="active site" description="Nucleophile" evidence="1">
    <location>
        <position position="11"/>
    </location>
</feature>
<feature type="binding site" evidence="1">
    <location>
        <position position="11"/>
    </location>
    <ligand>
        <name>Mg(2+)</name>
        <dbReference type="ChEBI" id="CHEBI:18420"/>
    </ligand>
</feature>
<feature type="binding site" evidence="1">
    <location>
        <position position="13"/>
    </location>
    <ligand>
        <name>Mg(2+)</name>
        <dbReference type="ChEBI" id="CHEBI:18420"/>
    </ligand>
</feature>
<feature type="binding site" evidence="1">
    <location>
        <position position="177"/>
    </location>
    <ligand>
        <name>Mg(2+)</name>
        <dbReference type="ChEBI" id="CHEBI:18420"/>
    </ligand>
</feature>
<organism>
    <name type="scientific">Mannheimia succiniciproducens (strain KCTC 0769BP / MBEL55E)</name>
    <dbReference type="NCBI Taxonomy" id="221988"/>
    <lineage>
        <taxon>Bacteria</taxon>
        <taxon>Pseudomonadati</taxon>
        <taxon>Pseudomonadota</taxon>
        <taxon>Gammaproteobacteria</taxon>
        <taxon>Pasteurellales</taxon>
        <taxon>Pasteurellaceae</taxon>
        <taxon>Basfia</taxon>
    </lineage>
</organism>
<evidence type="ECO:0000255" key="1">
    <source>
        <dbReference type="HAMAP-Rule" id="MF_00495"/>
    </source>
</evidence>
<proteinExistence type="inferred from homology"/>
<name>GPH_MANSM</name>
<comment type="function">
    <text evidence="1">Specifically catalyzes the dephosphorylation of 2-phosphoglycolate. Is involved in the dissimilation of the intracellular 2-phosphoglycolate formed during the DNA repair of 3'-phosphoglycolate ends, a major class of DNA lesions induced by oxidative stress.</text>
</comment>
<comment type="catalytic activity">
    <reaction evidence="1">
        <text>2-phosphoglycolate + H2O = glycolate + phosphate</text>
        <dbReference type="Rhea" id="RHEA:14369"/>
        <dbReference type="ChEBI" id="CHEBI:15377"/>
        <dbReference type="ChEBI" id="CHEBI:29805"/>
        <dbReference type="ChEBI" id="CHEBI:43474"/>
        <dbReference type="ChEBI" id="CHEBI:58033"/>
        <dbReference type="EC" id="3.1.3.18"/>
    </reaction>
</comment>
<comment type="cofactor">
    <cofactor evidence="1">
        <name>Mg(2+)</name>
        <dbReference type="ChEBI" id="CHEBI:18420"/>
    </cofactor>
</comment>
<comment type="pathway">
    <text evidence="1">Organic acid metabolism; glycolate biosynthesis; glycolate from 2-phosphoglycolate: step 1/1.</text>
</comment>
<comment type="similarity">
    <text evidence="1">Belongs to the HAD-like hydrolase superfamily. CbbY/CbbZ/Gph/YieH family.</text>
</comment>
<protein>
    <recommendedName>
        <fullName evidence="1">Phosphoglycolate phosphatase</fullName>
        <shortName evidence="1">PGP</shortName>
        <shortName evidence="1">PGPase</shortName>
        <ecNumber evidence="1">3.1.3.18</ecNumber>
    </recommendedName>
</protein>
<accession>Q65Q22</accession>
<keyword id="KW-0119">Carbohydrate metabolism</keyword>
<keyword id="KW-0378">Hydrolase</keyword>
<keyword id="KW-0460">Magnesium</keyword>
<keyword id="KW-0479">Metal-binding</keyword>
<gene>
    <name type="ordered locus">MS2331</name>
</gene>